<protein>
    <recommendedName>
        <fullName evidence="4">Weak toxin NWT</fullName>
    </recommendedName>
</protein>
<feature type="chain" id="PRO_0000447297" description="Weak toxin NWT" evidence="3">
    <location>
        <begin position="1"/>
        <end position="53"/>
    </location>
</feature>
<feature type="disulfide bond" evidence="2">
    <location>
        <begin position="6"/>
        <end position="11"/>
    </location>
</feature>
<feature type="disulfide bond" evidence="2">
    <location>
        <begin position="17"/>
        <end position="33"/>
    </location>
</feature>
<feature type="disulfide bond" evidence="2">
    <location>
        <begin position="37"/>
        <end position="48"/>
    </location>
</feature>
<sequence length="53" mass="6139">LTCLICPEKYCNKVHTCLNGEKIYDQRKYIRGCADTCPVRKPREIVECCSTDK</sequence>
<name>3NO2N_NAJKA</name>
<proteinExistence type="evidence at protein level"/>
<comment type="function">
    <text evidence="1">Binds with low affinity and weakly inhibits muscle nicotinic acetylcholine receptor (nAChR).</text>
</comment>
<comment type="subcellular location">
    <subcellularLocation>
        <location evidence="3">Secreted</location>
    </subcellularLocation>
</comment>
<comment type="tissue specificity">
    <text evidence="6">Expressed by the venom gland.</text>
</comment>
<comment type="similarity">
    <text evidence="5">Belongs to the three-finger toxin family. Ancestral subfamily. Orphan group II sub-subfamily.</text>
</comment>
<organism>
    <name type="scientific">Naja kaouthia</name>
    <name type="common">Monocled cobra</name>
    <name type="synonym">Naja siamensis</name>
    <dbReference type="NCBI Taxonomy" id="8649"/>
    <lineage>
        <taxon>Eukaryota</taxon>
        <taxon>Metazoa</taxon>
        <taxon>Chordata</taxon>
        <taxon>Craniata</taxon>
        <taxon>Vertebrata</taxon>
        <taxon>Euteleostomi</taxon>
        <taxon>Lepidosauria</taxon>
        <taxon>Squamata</taxon>
        <taxon>Bifurcata</taxon>
        <taxon>Unidentata</taxon>
        <taxon>Episquamata</taxon>
        <taxon>Toxicofera</taxon>
        <taxon>Serpentes</taxon>
        <taxon>Colubroidea</taxon>
        <taxon>Elapidae</taxon>
        <taxon>Elapinae</taxon>
        <taxon>Naja</taxon>
    </lineage>
</organism>
<dbReference type="SMR" id="P0DSM9"/>
<dbReference type="GO" id="GO:0005576">
    <property type="term" value="C:extracellular region"/>
    <property type="evidence" value="ECO:0007669"/>
    <property type="project" value="UniProtKB-SubCell"/>
</dbReference>
<dbReference type="GO" id="GO:0030550">
    <property type="term" value="F:acetylcholine receptor inhibitor activity"/>
    <property type="evidence" value="ECO:0007669"/>
    <property type="project" value="UniProtKB-KW"/>
</dbReference>
<dbReference type="GO" id="GO:0099106">
    <property type="term" value="F:ion channel regulator activity"/>
    <property type="evidence" value="ECO:0007669"/>
    <property type="project" value="UniProtKB-KW"/>
</dbReference>
<dbReference type="GO" id="GO:0090729">
    <property type="term" value="F:toxin activity"/>
    <property type="evidence" value="ECO:0007669"/>
    <property type="project" value="UniProtKB-KW"/>
</dbReference>
<dbReference type="CDD" id="cd00206">
    <property type="entry name" value="TFP_snake_toxin"/>
    <property type="match status" value="1"/>
</dbReference>
<dbReference type="Gene3D" id="2.10.60.10">
    <property type="entry name" value="CD59"/>
    <property type="match status" value="1"/>
</dbReference>
<dbReference type="InterPro" id="IPR003571">
    <property type="entry name" value="Snake_3FTx"/>
</dbReference>
<dbReference type="InterPro" id="IPR045860">
    <property type="entry name" value="Snake_toxin-like_sf"/>
</dbReference>
<dbReference type="InterPro" id="IPR018354">
    <property type="entry name" value="Snake_toxin_con_site"/>
</dbReference>
<dbReference type="InterPro" id="IPR054131">
    <property type="entry name" value="Toxin_cobra-type"/>
</dbReference>
<dbReference type="Pfam" id="PF21947">
    <property type="entry name" value="Toxin_cobra-type"/>
    <property type="match status" value="1"/>
</dbReference>
<dbReference type="SUPFAM" id="SSF57302">
    <property type="entry name" value="Snake toxin-like"/>
    <property type="match status" value="1"/>
</dbReference>
<dbReference type="PROSITE" id="PS00272">
    <property type="entry name" value="SNAKE_TOXIN"/>
    <property type="match status" value="1"/>
</dbReference>
<evidence type="ECO:0000250" key="1">
    <source>
        <dbReference type="UniProtKB" id="O93422"/>
    </source>
</evidence>
<evidence type="ECO:0000250" key="2">
    <source>
        <dbReference type="UniProtKB" id="Q8AY51"/>
    </source>
</evidence>
<evidence type="ECO:0000269" key="3">
    <source>
    </source>
</evidence>
<evidence type="ECO:0000303" key="4">
    <source>
    </source>
</evidence>
<evidence type="ECO:0000305" key="5"/>
<evidence type="ECO:0000305" key="6">
    <source>
    </source>
</evidence>
<accession>P0DSM9</accession>
<keyword id="KW-0008">Acetylcholine receptor inhibiting toxin</keyword>
<keyword id="KW-0903">Direct protein sequencing</keyword>
<keyword id="KW-1015">Disulfide bond</keyword>
<keyword id="KW-0872">Ion channel impairing toxin</keyword>
<keyword id="KW-0528">Neurotoxin</keyword>
<keyword id="KW-0629">Postsynaptic neurotoxin</keyword>
<keyword id="KW-0964">Secreted</keyword>
<keyword id="KW-0800">Toxin</keyword>
<reference key="1">
    <citation type="journal article" date="2009" name="Russ. J. Bioorg. Chem.">
        <title>New weak toxins from the cobra venom.</title>
        <authorList>
            <person name="Starkov V.G."/>
            <person name="Polyak Y.L."/>
            <person name="Vulfius E.A."/>
            <person name="Kryukova E.V."/>
            <person name="Tsetlin V.I."/>
            <person name="Utkin Y.N."/>
        </authorList>
    </citation>
    <scope>PROTEIN SEQUENCE</scope>
    <scope>IDENTIFICATION BY MASS SPECTROMETRY</scope>
    <scope>FUNCTION</scope>
    <scope>SUBCELLULAR LOCATION</scope>
    <source>
        <tissue>Venom</tissue>
    </source>
</reference>